<gene>
    <name evidence="1" type="primary">panC</name>
    <name type="ordered locus">Tmel_1610</name>
</gene>
<dbReference type="EC" id="6.3.2.1" evidence="1"/>
<dbReference type="EMBL" id="CP000716">
    <property type="protein sequence ID" value="ABR31454.1"/>
    <property type="molecule type" value="Genomic_DNA"/>
</dbReference>
<dbReference type="RefSeq" id="WP_012057813.1">
    <property type="nucleotide sequence ID" value="NC_009616.1"/>
</dbReference>
<dbReference type="SMR" id="A6LNF3"/>
<dbReference type="STRING" id="391009.Tmel_1610"/>
<dbReference type="KEGG" id="tme:Tmel_1610"/>
<dbReference type="eggNOG" id="COG0414">
    <property type="taxonomic scope" value="Bacteria"/>
</dbReference>
<dbReference type="HOGENOM" id="CLU_047148_0_0_0"/>
<dbReference type="OrthoDB" id="9773087at2"/>
<dbReference type="UniPathway" id="UPA00028">
    <property type="reaction ID" value="UER00005"/>
</dbReference>
<dbReference type="Proteomes" id="UP000001110">
    <property type="component" value="Chromosome"/>
</dbReference>
<dbReference type="GO" id="GO:0005829">
    <property type="term" value="C:cytosol"/>
    <property type="evidence" value="ECO:0007669"/>
    <property type="project" value="TreeGrafter"/>
</dbReference>
<dbReference type="GO" id="GO:0005524">
    <property type="term" value="F:ATP binding"/>
    <property type="evidence" value="ECO:0007669"/>
    <property type="project" value="UniProtKB-KW"/>
</dbReference>
<dbReference type="GO" id="GO:0004592">
    <property type="term" value="F:pantoate-beta-alanine ligase activity"/>
    <property type="evidence" value="ECO:0007669"/>
    <property type="project" value="UniProtKB-UniRule"/>
</dbReference>
<dbReference type="GO" id="GO:0015940">
    <property type="term" value="P:pantothenate biosynthetic process"/>
    <property type="evidence" value="ECO:0007669"/>
    <property type="project" value="UniProtKB-UniRule"/>
</dbReference>
<dbReference type="CDD" id="cd00560">
    <property type="entry name" value="PanC"/>
    <property type="match status" value="1"/>
</dbReference>
<dbReference type="FunFam" id="3.30.1300.10:FF:000001">
    <property type="entry name" value="Pantothenate synthetase"/>
    <property type="match status" value="1"/>
</dbReference>
<dbReference type="FunFam" id="3.40.50.620:FF:000013">
    <property type="entry name" value="Pantothenate synthetase"/>
    <property type="match status" value="1"/>
</dbReference>
<dbReference type="Gene3D" id="3.40.50.620">
    <property type="entry name" value="HUPs"/>
    <property type="match status" value="1"/>
</dbReference>
<dbReference type="Gene3D" id="3.30.1300.10">
    <property type="entry name" value="Pantoate-beta-alanine ligase, C-terminal domain"/>
    <property type="match status" value="1"/>
</dbReference>
<dbReference type="HAMAP" id="MF_00158">
    <property type="entry name" value="PanC"/>
    <property type="match status" value="1"/>
</dbReference>
<dbReference type="InterPro" id="IPR004821">
    <property type="entry name" value="Cyt_trans-like"/>
</dbReference>
<dbReference type="InterPro" id="IPR003721">
    <property type="entry name" value="Pantoate_ligase"/>
</dbReference>
<dbReference type="InterPro" id="IPR042176">
    <property type="entry name" value="Pantoate_ligase_C"/>
</dbReference>
<dbReference type="InterPro" id="IPR014729">
    <property type="entry name" value="Rossmann-like_a/b/a_fold"/>
</dbReference>
<dbReference type="NCBIfam" id="TIGR00125">
    <property type="entry name" value="cyt_tran_rel"/>
    <property type="match status" value="1"/>
</dbReference>
<dbReference type="NCBIfam" id="TIGR00018">
    <property type="entry name" value="panC"/>
    <property type="match status" value="1"/>
</dbReference>
<dbReference type="PANTHER" id="PTHR21299">
    <property type="entry name" value="CYTIDYLATE KINASE/PANTOATE-BETA-ALANINE LIGASE"/>
    <property type="match status" value="1"/>
</dbReference>
<dbReference type="PANTHER" id="PTHR21299:SF1">
    <property type="entry name" value="PANTOATE--BETA-ALANINE LIGASE"/>
    <property type="match status" value="1"/>
</dbReference>
<dbReference type="Pfam" id="PF02569">
    <property type="entry name" value="Pantoate_ligase"/>
    <property type="match status" value="1"/>
</dbReference>
<dbReference type="SUPFAM" id="SSF52374">
    <property type="entry name" value="Nucleotidylyl transferase"/>
    <property type="match status" value="1"/>
</dbReference>
<sequence>MEVIKSIDKMKQISFENILKGKKIGFVPTMGYLHEGHLSLVRAAREENDILVVSIFVNPTQFGPNEDFESYPRDLKRDLSLLEKENVDYVFVPEVSDMYPNDYSTFVEEVVLSKFLCGASRPGHFRGVCTVVTKFFNIVKPTRAYFGQKDAQQFRVLRRMVRDLNLDVELREMPIVRELDGLAMSSRNTYLNDVERNEATRLYKSLLKAKELIEKGEKDVLKIKDEMKKILDHPLLKIDYIEFVDEETLRPVEKIEGKVIVAIAVFVGKARLIDNIIVGG</sequence>
<evidence type="ECO:0000255" key="1">
    <source>
        <dbReference type="HAMAP-Rule" id="MF_00158"/>
    </source>
</evidence>
<keyword id="KW-0067">ATP-binding</keyword>
<keyword id="KW-0963">Cytoplasm</keyword>
<keyword id="KW-0436">Ligase</keyword>
<keyword id="KW-0547">Nucleotide-binding</keyword>
<keyword id="KW-0566">Pantothenate biosynthesis</keyword>
<name>PANC_THEM4</name>
<protein>
    <recommendedName>
        <fullName evidence="1">Pantothenate synthetase</fullName>
        <shortName evidence="1">PS</shortName>
        <ecNumber evidence="1">6.3.2.1</ecNumber>
    </recommendedName>
    <alternativeName>
        <fullName evidence="1">Pantoate--beta-alanine ligase</fullName>
    </alternativeName>
    <alternativeName>
        <fullName evidence="1">Pantoate-activating enzyme</fullName>
    </alternativeName>
</protein>
<accession>A6LNF3</accession>
<comment type="function">
    <text evidence="1">Catalyzes the condensation of pantoate with beta-alanine in an ATP-dependent reaction via a pantoyl-adenylate intermediate.</text>
</comment>
<comment type="catalytic activity">
    <reaction evidence="1">
        <text>(R)-pantoate + beta-alanine + ATP = (R)-pantothenate + AMP + diphosphate + H(+)</text>
        <dbReference type="Rhea" id="RHEA:10912"/>
        <dbReference type="ChEBI" id="CHEBI:15378"/>
        <dbReference type="ChEBI" id="CHEBI:15980"/>
        <dbReference type="ChEBI" id="CHEBI:29032"/>
        <dbReference type="ChEBI" id="CHEBI:30616"/>
        <dbReference type="ChEBI" id="CHEBI:33019"/>
        <dbReference type="ChEBI" id="CHEBI:57966"/>
        <dbReference type="ChEBI" id="CHEBI:456215"/>
        <dbReference type="EC" id="6.3.2.1"/>
    </reaction>
</comment>
<comment type="pathway">
    <text evidence="1">Cofactor biosynthesis; (R)-pantothenate biosynthesis; (R)-pantothenate from (R)-pantoate and beta-alanine: step 1/1.</text>
</comment>
<comment type="subunit">
    <text evidence="1">Homodimer.</text>
</comment>
<comment type="subcellular location">
    <subcellularLocation>
        <location evidence="1">Cytoplasm</location>
    </subcellularLocation>
</comment>
<comment type="miscellaneous">
    <text evidence="1">The reaction proceeds by a bi uni uni bi ping pong mechanism.</text>
</comment>
<comment type="similarity">
    <text evidence="1">Belongs to the pantothenate synthetase family.</text>
</comment>
<feature type="chain" id="PRO_1000076874" description="Pantothenate synthetase">
    <location>
        <begin position="1"/>
        <end position="280"/>
    </location>
</feature>
<feature type="active site" description="Proton donor" evidence="1">
    <location>
        <position position="37"/>
    </location>
</feature>
<feature type="binding site" evidence="1">
    <location>
        <begin position="30"/>
        <end position="37"/>
    </location>
    <ligand>
        <name>ATP</name>
        <dbReference type="ChEBI" id="CHEBI:30616"/>
    </ligand>
</feature>
<feature type="binding site" evidence="1">
    <location>
        <position position="61"/>
    </location>
    <ligand>
        <name>(R)-pantoate</name>
        <dbReference type="ChEBI" id="CHEBI:15980"/>
    </ligand>
</feature>
<feature type="binding site" evidence="1">
    <location>
        <position position="61"/>
    </location>
    <ligand>
        <name>beta-alanine</name>
        <dbReference type="ChEBI" id="CHEBI:57966"/>
    </ligand>
</feature>
<feature type="binding site" evidence="1">
    <location>
        <begin position="147"/>
        <end position="150"/>
    </location>
    <ligand>
        <name>ATP</name>
        <dbReference type="ChEBI" id="CHEBI:30616"/>
    </ligand>
</feature>
<feature type="binding site" evidence="1">
    <location>
        <position position="153"/>
    </location>
    <ligand>
        <name>(R)-pantoate</name>
        <dbReference type="ChEBI" id="CHEBI:15980"/>
    </ligand>
</feature>
<feature type="binding site" evidence="1">
    <location>
        <position position="176"/>
    </location>
    <ligand>
        <name>ATP</name>
        <dbReference type="ChEBI" id="CHEBI:30616"/>
    </ligand>
</feature>
<feature type="binding site" evidence="1">
    <location>
        <begin position="184"/>
        <end position="187"/>
    </location>
    <ligand>
        <name>ATP</name>
        <dbReference type="ChEBI" id="CHEBI:30616"/>
    </ligand>
</feature>
<organism>
    <name type="scientific">Thermosipho melanesiensis (strain DSM 12029 / CIP 104789 / BI429)</name>
    <dbReference type="NCBI Taxonomy" id="391009"/>
    <lineage>
        <taxon>Bacteria</taxon>
        <taxon>Thermotogati</taxon>
        <taxon>Thermotogota</taxon>
        <taxon>Thermotogae</taxon>
        <taxon>Thermotogales</taxon>
        <taxon>Fervidobacteriaceae</taxon>
        <taxon>Thermosipho</taxon>
    </lineage>
</organism>
<proteinExistence type="inferred from homology"/>
<reference key="1">
    <citation type="submission" date="2007-05" db="EMBL/GenBank/DDBJ databases">
        <title>Complete sequence of Thermosipho melanesiensis BI429.</title>
        <authorList>
            <consortium name="US DOE Joint Genome Institute"/>
            <person name="Copeland A."/>
            <person name="Lucas S."/>
            <person name="Lapidus A."/>
            <person name="Barry K."/>
            <person name="Glavina del Rio T."/>
            <person name="Dalin E."/>
            <person name="Tice H."/>
            <person name="Pitluck S."/>
            <person name="Chertkov O."/>
            <person name="Brettin T."/>
            <person name="Bruce D."/>
            <person name="Detter J.C."/>
            <person name="Han C."/>
            <person name="Schmutz J."/>
            <person name="Larimer F."/>
            <person name="Land M."/>
            <person name="Hauser L."/>
            <person name="Kyrpides N."/>
            <person name="Mikhailova N."/>
            <person name="Nelson K."/>
            <person name="Gogarten J.P."/>
            <person name="Noll K."/>
            <person name="Richardson P."/>
        </authorList>
    </citation>
    <scope>NUCLEOTIDE SEQUENCE [LARGE SCALE GENOMIC DNA]</scope>
    <source>
        <strain>DSM 12029 / CIP 104789 / BI429</strain>
    </source>
</reference>